<organism>
    <name type="scientific">Rickettsia bellii (strain RML369-C)</name>
    <dbReference type="NCBI Taxonomy" id="336407"/>
    <lineage>
        <taxon>Bacteria</taxon>
        <taxon>Pseudomonadati</taxon>
        <taxon>Pseudomonadota</taxon>
        <taxon>Alphaproteobacteria</taxon>
        <taxon>Rickettsiales</taxon>
        <taxon>Rickettsiaceae</taxon>
        <taxon>Rickettsieae</taxon>
        <taxon>Rickettsia</taxon>
        <taxon>belli group</taxon>
    </lineage>
</organism>
<evidence type="ECO:0000255" key="1">
    <source>
        <dbReference type="HAMAP-Rule" id="MF_00074"/>
    </source>
</evidence>
<accession>Q1RGT2</accession>
<comment type="function">
    <text evidence="1">Specifically methylates the N7 position of guanine in position 527 of 16S rRNA.</text>
</comment>
<comment type="catalytic activity">
    <reaction evidence="1">
        <text>guanosine(527) in 16S rRNA + S-adenosyl-L-methionine = N(7)-methylguanosine(527) in 16S rRNA + S-adenosyl-L-homocysteine</text>
        <dbReference type="Rhea" id="RHEA:42732"/>
        <dbReference type="Rhea" id="RHEA-COMP:10209"/>
        <dbReference type="Rhea" id="RHEA-COMP:10210"/>
        <dbReference type="ChEBI" id="CHEBI:57856"/>
        <dbReference type="ChEBI" id="CHEBI:59789"/>
        <dbReference type="ChEBI" id="CHEBI:74269"/>
        <dbReference type="ChEBI" id="CHEBI:74480"/>
        <dbReference type="EC" id="2.1.1.170"/>
    </reaction>
</comment>
<comment type="subcellular location">
    <subcellularLocation>
        <location evidence="1">Cytoplasm</location>
    </subcellularLocation>
</comment>
<comment type="similarity">
    <text evidence="1">Belongs to the methyltransferase superfamily. RNA methyltransferase RsmG family.</text>
</comment>
<name>RSMG_RICBR</name>
<dbReference type="EC" id="2.1.1.170" evidence="1"/>
<dbReference type="EMBL" id="CP000087">
    <property type="protein sequence ID" value="ABE05432.1"/>
    <property type="molecule type" value="Genomic_DNA"/>
</dbReference>
<dbReference type="RefSeq" id="WP_011478001.1">
    <property type="nucleotide sequence ID" value="NC_007940.1"/>
</dbReference>
<dbReference type="SMR" id="Q1RGT2"/>
<dbReference type="KEGG" id="rbe:RBE_1351"/>
<dbReference type="eggNOG" id="COG0357">
    <property type="taxonomic scope" value="Bacteria"/>
</dbReference>
<dbReference type="HOGENOM" id="CLU_065341_1_1_5"/>
<dbReference type="OrthoDB" id="9808773at2"/>
<dbReference type="Proteomes" id="UP000001951">
    <property type="component" value="Chromosome"/>
</dbReference>
<dbReference type="GO" id="GO:0005829">
    <property type="term" value="C:cytosol"/>
    <property type="evidence" value="ECO:0007669"/>
    <property type="project" value="TreeGrafter"/>
</dbReference>
<dbReference type="GO" id="GO:0070043">
    <property type="term" value="F:rRNA (guanine-N7-)-methyltransferase activity"/>
    <property type="evidence" value="ECO:0007669"/>
    <property type="project" value="UniProtKB-UniRule"/>
</dbReference>
<dbReference type="Gene3D" id="3.40.50.150">
    <property type="entry name" value="Vaccinia Virus protein VP39"/>
    <property type="match status" value="1"/>
</dbReference>
<dbReference type="HAMAP" id="MF_00074">
    <property type="entry name" value="16SrRNA_methyltr_G"/>
    <property type="match status" value="1"/>
</dbReference>
<dbReference type="InterPro" id="IPR003682">
    <property type="entry name" value="rRNA_ssu_MeTfrase_G"/>
</dbReference>
<dbReference type="InterPro" id="IPR029063">
    <property type="entry name" value="SAM-dependent_MTases_sf"/>
</dbReference>
<dbReference type="NCBIfam" id="TIGR00138">
    <property type="entry name" value="rsmG_gidB"/>
    <property type="match status" value="1"/>
</dbReference>
<dbReference type="PANTHER" id="PTHR31760">
    <property type="entry name" value="S-ADENOSYL-L-METHIONINE-DEPENDENT METHYLTRANSFERASES SUPERFAMILY PROTEIN"/>
    <property type="match status" value="1"/>
</dbReference>
<dbReference type="PANTHER" id="PTHR31760:SF0">
    <property type="entry name" value="S-ADENOSYL-L-METHIONINE-DEPENDENT METHYLTRANSFERASES SUPERFAMILY PROTEIN"/>
    <property type="match status" value="1"/>
</dbReference>
<dbReference type="Pfam" id="PF02527">
    <property type="entry name" value="GidB"/>
    <property type="match status" value="1"/>
</dbReference>
<dbReference type="PIRSF" id="PIRSF003078">
    <property type="entry name" value="GidB"/>
    <property type="match status" value="1"/>
</dbReference>
<dbReference type="SUPFAM" id="SSF53335">
    <property type="entry name" value="S-adenosyl-L-methionine-dependent methyltransferases"/>
    <property type="match status" value="1"/>
</dbReference>
<keyword id="KW-0963">Cytoplasm</keyword>
<keyword id="KW-0489">Methyltransferase</keyword>
<keyword id="KW-0698">rRNA processing</keyword>
<keyword id="KW-0949">S-adenosyl-L-methionine</keyword>
<keyword id="KW-0808">Transferase</keyword>
<reference key="1">
    <citation type="journal article" date="2006" name="PLoS Genet.">
        <title>Genome sequence of Rickettsia bellii illuminates the role of amoebae in gene exchanges between intracellular pathogens.</title>
        <authorList>
            <person name="Ogata H."/>
            <person name="La Scola B."/>
            <person name="Audic S."/>
            <person name="Renesto P."/>
            <person name="Blanc G."/>
            <person name="Robert C."/>
            <person name="Fournier P.-E."/>
            <person name="Claverie J.-M."/>
            <person name="Raoult D."/>
        </authorList>
    </citation>
    <scope>NUCLEOTIDE SEQUENCE [LARGE SCALE GENOMIC DNA]</scope>
    <source>
        <strain>RML369-C</strain>
    </source>
</reference>
<gene>
    <name evidence="1" type="primary">rsmG</name>
    <name type="ordered locus">RBE_1351</name>
</gene>
<feature type="chain" id="PRO_0000274837" description="Ribosomal RNA small subunit methyltransferase G">
    <location>
        <begin position="1"/>
        <end position="192"/>
    </location>
</feature>
<feature type="binding site" evidence="1">
    <location>
        <position position="63"/>
    </location>
    <ligand>
        <name>S-adenosyl-L-methionine</name>
        <dbReference type="ChEBI" id="CHEBI:59789"/>
    </ligand>
</feature>
<feature type="binding site" evidence="1">
    <location>
        <position position="68"/>
    </location>
    <ligand>
        <name>S-adenosyl-L-methionine</name>
        <dbReference type="ChEBI" id="CHEBI:59789"/>
    </ligand>
</feature>
<feature type="binding site" evidence="1">
    <location>
        <begin position="112"/>
        <end position="113"/>
    </location>
    <ligand>
        <name>S-adenosyl-L-methionine</name>
        <dbReference type="ChEBI" id="CHEBI:59789"/>
    </ligand>
</feature>
<feature type="binding site" evidence="1">
    <location>
        <position position="125"/>
    </location>
    <ligand>
        <name>S-adenosyl-L-methionine</name>
        <dbReference type="ChEBI" id="CHEBI:59789"/>
    </ligand>
</feature>
<proteinExistence type="inferred from homology"/>
<protein>
    <recommendedName>
        <fullName evidence="1">Ribosomal RNA small subunit methyltransferase G</fullName>
        <ecNumber evidence="1">2.1.1.170</ecNumber>
    </recommendedName>
    <alternativeName>
        <fullName evidence="1">16S rRNA 7-methylguanosine methyltransferase</fullName>
        <shortName evidence="1">16S rRNA m7G methyltransferase</shortName>
    </alternativeName>
</protein>
<sequence length="192" mass="21875">MIDVPHEVIEKLQIFQDLVQKWNKAINLISENSTQNFWKRHILDSLQLIQYINDKEIHLVDIGSGAGFPGIILSIAGVASTSLIEADLRKCIFLEKAAKISNNNIQIINQRIEKTEISCNILTCRAFSNLNTIFDCTKNISVQNKFLLPKGKSYLSEIKEARKKWLFKCLINQSITSKESKILEISDLTKII</sequence>